<dbReference type="EC" id="4.1.1.48"/>
<dbReference type="EMBL" id="AE000657">
    <property type="protein sequence ID" value="AAC07616.1"/>
    <property type="molecule type" value="Genomic_DNA"/>
</dbReference>
<dbReference type="PIR" id="G70453">
    <property type="entry name" value="G70453"/>
</dbReference>
<dbReference type="RefSeq" id="NP_214223.1">
    <property type="nucleotide sequence ID" value="NC_000918.1"/>
</dbReference>
<dbReference type="RefSeq" id="WP_010881160.1">
    <property type="nucleotide sequence ID" value="NC_000918.1"/>
</dbReference>
<dbReference type="SMR" id="O67657"/>
<dbReference type="STRING" id="224324.aq_1787"/>
<dbReference type="EnsemblBacteria" id="AAC07616">
    <property type="protein sequence ID" value="AAC07616"/>
    <property type="gene ID" value="aq_1787"/>
</dbReference>
<dbReference type="KEGG" id="aae:aq_1787"/>
<dbReference type="PATRIC" id="fig|224324.8.peg.1380"/>
<dbReference type="eggNOG" id="COG0134">
    <property type="taxonomic scope" value="Bacteria"/>
</dbReference>
<dbReference type="HOGENOM" id="CLU_034247_2_0_0"/>
<dbReference type="InParanoid" id="O67657"/>
<dbReference type="OrthoDB" id="9804217at2"/>
<dbReference type="UniPathway" id="UPA00035">
    <property type="reaction ID" value="UER00043"/>
</dbReference>
<dbReference type="Proteomes" id="UP000000798">
    <property type="component" value="Chromosome"/>
</dbReference>
<dbReference type="GO" id="GO:0004425">
    <property type="term" value="F:indole-3-glycerol-phosphate synthase activity"/>
    <property type="evidence" value="ECO:0000318"/>
    <property type="project" value="GO_Central"/>
</dbReference>
<dbReference type="GO" id="GO:0004640">
    <property type="term" value="F:phosphoribosylanthranilate isomerase activity"/>
    <property type="evidence" value="ECO:0000318"/>
    <property type="project" value="GO_Central"/>
</dbReference>
<dbReference type="GO" id="GO:0000162">
    <property type="term" value="P:L-tryptophan biosynthetic process"/>
    <property type="evidence" value="ECO:0000318"/>
    <property type="project" value="GO_Central"/>
</dbReference>
<dbReference type="CDD" id="cd00331">
    <property type="entry name" value="IGPS"/>
    <property type="match status" value="1"/>
</dbReference>
<dbReference type="FunFam" id="3.20.20.70:FF:000024">
    <property type="entry name" value="Indole-3-glycerol phosphate synthase"/>
    <property type="match status" value="1"/>
</dbReference>
<dbReference type="Gene3D" id="3.20.20.70">
    <property type="entry name" value="Aldolase class I"/>
    <property type="match status" value="1"/>
</dbReference>
<dbReference type="HAMAP" id="MF_00134_A">
    <property type="entry name" value="IGPS_A"/>
    <property type="match status" value="1"/>
</dbReference>
<dbReference type="HAMAP" id="MF_00134_B">
    <property type="entry name" value="IGPS_B"/>
    <property type="match status" value="1"/>
</dbReference>
<dbReference type="InterPro" id="IPR013785">
    <property type="entry name" value="Aldolase_TIM"/>
</dbReference>
<dbReference type="InterPro" id="IPR045186">
    <property type="entry name" value="Indole-3-glycerol_P_synth"/>
</dbReference>
<dbReference type="InterPro" id="IPR013798">
    <property type="entry name" value="Indole-3-glycerol_P_synth_dom"/>
</dbReference>
<dbReference type="InterPro" id="IPR001468">
    <property type="entry name" value="Indole-3-GlycerolPSynthase_CS"/>
</dbReference>
<dbReference type="InterPro" id="IPR011060">
    <property type="entry name" value="RibuloseP-bd_barrel"/>
</dbReference>
<dbReference type="NCBIfam" id="NF001377">
    <property type="entry name" value="PRK00278.2-4"/>
    <property type="match status" value="1"/>
</dbReference>
<dbReference type="PANTHER" id="PTHR22854:SF2">
    <property type="entry name" value="INDOLE-3-GLYCEROL-PHOSPHATE SYNTHASE"/>
    <property type="match status" value="1"/>
</dbReference>
<dbReference type="PANTHER" id="PTHR22854">
    <property type="entry name" value="TRYPTOPHAN BIOSYNTHESIS PROTEIN"/>
    <property type="match status" value="1"/>
</dbReference>
<dbReference type="Pfam" id="PF00218">
    <property type="entry name" value="IGPS"/>
    <property type="match status" value="1"/>
</dbReference>
<dbReference type="SUPFAM" id="SSF51366">
    <property type="entry name" value="Ribulose-phoshate binding barrel"/>
    <property type="match status" value="1"/>
</dbReference>
<dbReference type="PROSITE" id="PS00614">
    <property type="entry name" value="IGPS"/>
    <property type="match status" value="1"/>
</dbReference>
<reference key="1">
    <citation type="journal article" date="1998" name="Nature">
        <title>The complete genome of the hyperthermophilic bacterium Aquifex aeolicus.</title>
        <authorList>
            <person name="Deckert G."/>
            <person name="Warren P.V."/>
            <person name="Gaasterland T."/>
            <person name="Young W.G."/>
            <person name="Lenox A.L."/>
            <person name="Graham D.E."/>
            <person name="Overbeek R."/>
            <person name="Snead M.A."/>
            <person name="Keller M."/>
            <person name="Aujay M."/>
            <person name="Huber R."/>
            <person name="Feldman R.A."/>
            <person name="Short J.M."/>
            <person name="Olsen G.J."/>
            <person name="Swanson R.V."/>
        </authorList>
    </citation>
    <scope>NUCLEOTIDE SEQUENCE [LARGE SCALE GENOMIC DNA]</scope>
    <source>
        <strain>VF5</strain>
    </source>
</reference>
<organism>
    <name type="scientific">Aquifex aeolicus (strain VF5)</name>
    <dbReference type="NCBI Taxonomy" id="224324"/>
    <lineage>
        <taxon>Bacteria</taxon>
        <taxon>Pseudomonadati</taxon>
        <taxon>Aquificota</taxon>
        <taxon>Aquificia</taxon>
        <taxon>Aquificales</taxon>
        <taxon>Aquificaceae</taxon>
        <taxon>Aquifex</taxon>
    </lineage>
</organism>
<sequence>MGFLEEVRSYKESQIDTSPEYLRKLEELIEERKEFYDFEKALTSCGTKIIAEVKKASPSEGNIKEVNPEEQAKLYEKAGAIAISVLTDEKYFKGSLEDLRNVRESVKLPLLRKDFTVHKVQILEAKAYGADIVLLIVRMLSDKELKELLDFSEELGLSPLVEVFTLDEAKRALDAGAKIIGINNRDLETFKVDINKTKELAPKIKDLGAKFVISESGISKREEILELMNYQVDGFLIGTSLMKSENPYRKLKELLGF</sequence>
<proteinExistence type="inferred from homology"/>
<keyword id="KW-0028">Amino-acid biosynthesis</keyword>
<keyword id="KW-0057">Aromatic amino acid biosynthesis</keyword>
<keyword id="KW-0210">Decarboxylase</keyword>
<keyword id="KW-0456">Lyase</keyword>
<keyword id="KW-1185">Reference proteome</keyword>
<keyword id="KW-0822">Tryptophan biosynthesis</keyword>
<protein>
    <recommendedName>
        <fullName>Indole-3-glycerol phosphate synthase</fullName>
        <shortName>IGPS</shortName>
        <ecNumber>4.1.1.48</ecNumber>
    </recommendedName>
</protein>
<comment type="catalytic activity">
    <reaction>
        <text>1-(2-carboxyphenylamino)-1-deoxy-D-ribulose 5-phosphate + H(+) = (1S,2R)-1-C-(indol-3-yl)glycerol 3-phosphate + CO2 + H2O</text>
        <dbReference type="Rhea" id="RHEA:23476"/>
        <dbReference type="ChEBI" id="CHEBI:15377"/>
        <dbReference type="ChEBI" id="CHEBI:15378"/>
        <dbReference type="ChEBI" id="CHEBI:16526"/>
        <dbReference type="ChEBI" id="CHEBI:58613"/>
        <dbReference type="ChEBI" id="CHEBI:58866"/>
        <dbReference type="EC" id="4.1.1.48"/>
    </reaction>
</comment>
<comment type="pathway">
    <text>Amino-acid biosynthesis; L-tryptophan biosynthesis; L-tryptophan from chorismate: step 4/5.</text>
</comment>
<comment type="similarity">
    <text evidence="1">Belongs to the TrpC family.</text>
</comment>
<evidence type="ECO:0000305" key="1"/>
<name>TRPC_AQUAE</name>
<gene>
    <name type="primary">trpC</name>
    <name type="ordered locus">aq_1787</name>
</gene>
<accession>O67657</accession>
<feature type="chain" id="PRO_0000154206" description="Indole-3-glycerol phosphate synthase">
    <location>
        <begin position="1"/>
        <end position="257"/>
    </location>
</feature>